<comment type="catalytic activity">
    <reaction evidence="1">
        <text>tRNA(Cys) + L-cysteine + ATP = L-cysteinyl-tRNA(Cys) + AMP + diphosphate</text>
        <dbReference type="Rhea" id="RHEA:17773"/>
        <dbReference type="Rhea" id="RHEA-COMP:9661"/>
        <dbReference type="Rhea" id="RHEA-COMP:9679"/>
        <dbReference type="ChEBI" id="CHEBI:30616"/>
        <dbReference type="ChEBI" id="CHEBI:33019"/>
        <dbReference type="ChEBI" id="CHEBI:35235"/>
        <dbReference type="ChEBI" id="CHEBI:78442"/>
        <dbReference type="ChEBI" id="CHEBI:78517"/>
        <dbReference type="ChEBI" id="CHEBI:456215"/>
        <dbReference type="EC" id="6.1.1.16"/>
    </reaction>
</comment>
<comment type="cofactor">
    <cofactor evidence="1">
        <name>Zn(2+)</name>
        <dbReference type="ChEBI" id="CHEBI:29105"/>
    </cofactor>
    <text evidence="1">Binds 1 zinc ion per subunit.</text>
</comment>
<comment type="subunit">
    <text evidence="1">Monomer.</text>
</comment>
<comment type="subcellular location">
    <subcellularLocation>
        <location evidence="1">Cytoplasm</location>
    </subcellularLocation>
</comment>
<comment type="similarity">
    <text evidence="1">Belongs to the class-I aminoacyl-tRNA synthetase family.</text>
</comment>
<reference key="1">
    <citation type="submission" date="2008-01" db="EMBL/GenBank/DDBJ databases">
        <title>Complete sequence of Thermoanaerobacter sp. X514.</title>
        <authorList>
            <consortium name="US DOE Joint Genome Institute"/>
            <person name="Copeland A."/>
            <person name="Lucas S."/>
            <person name="Lapidus A."/>
            <person name="Barry K."/>
            <person name="Glavina del Rio T."/>
            <person name="Dalin E."/>
            <person name="Tice H."/>
            <person name="Pitluck S."/>
            <person name="Bruce D."/>
            <person name="Goodwin L."/>
            <person name="Saunders E."/>
            <person name="Brettin T."/>
            <person name="Detter J.C."/>
            <person name="Han C."/>
            <person name="Schmutz J."/>
            <person name="Larimer F."/>
            <person name="Land M."/>
            <person name="Hauser L."/>
            <person name="Kyrpides N."/>
            <person name="Kim E."/>
            <person name="Hemme C."/>
            <person name="Fields M.W."/>
            <person name="He Z."/>
            <person name="Zhou J."/>
            <person name="Richardson P."/>
        </authorList>
    </citation>
    <scope>NUCLEOTIDE SEQUENCE [LARGE SCALE GENOMIC DNA]</scope>
    <source>
        <strain>X514</strain>
    </source>
</reference>
<keyword id="KW-0030">Aminoacyl-tRNA synthetase</keyword>
<keyword id="KW-0067">ATP-binding</keyword>
<keyword id="KW-0963">Cytoplasm</keyword>
<keyword id="KW-0436">Ligase</keyword>
<keyword id="KW-0479">Metal-binding</keyword>
<keyword id="KW-0547">Nucleotide-binding</keyword>
<keyword id="KW-0648">Protein biosynthesis</keyword>
<keyword id="KW-0862">Zinc</keyword>
<organism>
    <name type="scientific">Thermoanaerobacter sp. (strain X514)</name>
    <dbReference type="NCBI Taxonomy" id="399726"/>
    <lineage>
        <taxon>Bacteria</taxon>
        <taxon>Bacillati</taxon>
        <taxon>Bacillota</taxon>
        <taxon>Clostridia</taxon>
        <taxon>Thermoanaerobacterales</taxon>
        <taxon>Thermoanaerobacteraceae</taxon>
        <taxon>Thermoanaerobacter</taxon>
    </lineage>
</organism>
<evidence type="ECO:0000255" key="1">
    <source>
        <dbReference type="HAMAP-Rule" id="MF_00041"/>
    </source>
</evidence>
<sequence length="466" mass="54430">MKLYNTLSRTKEEFEPLNDKIVNMYVCGPTVYNYIHIGNARAFIVFDTVRRYLEYKGYKVNYVQNFTDIDDKIIKRAQEENVTTKEVAEKYIEEYFIDADNLGIKRATVHPKATEHIEDIIEFIKILIDKGYAYVVNGNVYFETAKFKDYGKLSHKNIEELQAGARIEINEEKKNPLDFVLWKAQKPGEPAWDSPWGKGRPGWHIECSVMSTKYLGKTLDIHAGGPDLVFPHHENEIAQSEAAYGQPFSKYWMHIGYLNINNEKMSKSKGNFFTVREITEKYNPEVLRLFMLMAHYRSPINFSLDLMEQAKSAYERLLNAVANLKHLLTVCKDRELNEEEKRIKEKFEEYKKEFEDAMDDDFNTADAISVLFEMSKTANTNISGNSSKKLVEYILDIFLKLSEILGLSYRGVETELNDEEILALIEERQKARKEKNWKLADEIRDRLREKGIILEDTPEGVRWKRV</sequence>
<name>SYC_THEPX</name>
<protein>
    <recommendedName>
        <fullName evidence="1">Cysteine--tRNA ligase</fullName>
        <ecNumber evidence="1">6.1.1.16</ecNumber>
    </recommendedName>
    <alternativeName>
        <fullName evidence="1">Cysteinyl-tRNA synthetase</fullName>
        <shortName evidence="1">CysRS</shortName>
    </alternativeName>
</protein>
<accession>B0K5F6</accession>
<gene>
    <name evidence="1" type="primary">cysS</name>
    <name type="ordered locus">Teth514_0846</name>
</gene>
<proteinExistence type="inferred from homology"/>
<dbReference type="EC" id="6.1.1.16" evidence="1"/>
<dbReference type="EMBL" id="CP000923">
    <property type="protein sequence ID" value="ABY92149.1"/>
    <property type="molecule type" value="Genomic_DNA"/>
</dbReference>
<dbReference type="RefSeq" id="WP_003868434.1">
    <property type="nucleotide sequence ID" value="NC_010320.1"/>
</dbReference>
<dbReference type="SMR" id="B0K5F6"/>
<dbReference type="KEGG" id="tex:Teth514_0846"/>
<dbReference type="HOGENOM" id="CLU_013528_0_1_9"/>
<dbReference type="Proteomes" id="UP000002155">
    <property type="component" value="Chromosome"/>
</dbReference>
<dbReference type="GO" id="GO:0005829">
    <property type="term" value="C:cytosol"/>
    <property type="evidence" value="ECO:0007669"/>
    <property type="project" value="TreeGrafter"/>
</dbReference>
<dbReference type="GO" id="GO:0005524">
    <property type="term" value="F:ATP binding"/>
    <property type="evidence" value="ECO:0007669"/>
    <property type="project" value="UniProtKB-UniRule"/>
</dbReference>
<dbReference type="GO" id="GO:0004817">
    <property type="term" value="F:cysteine-tRNA ligase activity"/>
    <property type="evidence" value="ECO:0007669"/>
    <property type="project" value="UniProtKB-UniRule"/>
</dbReference>
<dbReference type="GO" id="GO:0008270">
    <property type="term" value="F:zinc ion binding"/>
    <property type="evidence" value="ECO:0007669"/>
    <property type="project" value="UniProtKB-UniRule"/>
</dbReference>
<dbReference type="GO" id="GO:0006423">
    <property type="term" value="P:cysteinyl-tRNA aminoacylation"/>
    <property type="evidence" value="ECO:0007669"/>
    <property type="project" value="UniProtKB-UniRule"/>
</dbReference>
<dbReference type="CDD" id="cd00672">
    <property type="entry name" value="CysRS_core"/>
    <property type="match status" value="1"/>
</dbReference>
<dbReference type="FunFam" id="3.40.50.620:FF:000009">
    <property type="entry name" value="Cysteine--tRNA ligase"/>
    <property type="match status" value="1"/>
</dbReference>
<dbReference type="Gene3D" id="1.20.120.1910">
    <property type="entry name" value="Cysteine-tRNA ligase, C-terminal anti-codon recognition domain"/>
    <property type="match status" value="1"/>
</dbReference>
<dbReference type="Gene3D" id="3.40.50.620">
    <property type="entry name" value="HUPs"/>
    <property type="match status" value="1"/>
</dbReference>
<dbReference type="HAMAP" id="MF_00041">
    <property type="entry name" value="Cys_tRNA_synth"/>
    <property type="match status" value="1"/>
</dbReference>
<dbReference type="InterPro" id="IPR015803">
    <property type="entry name" value="Cys-tRNA-ligase"/>
</dbReference>
<dbReference type="InterPro" id="IPR015273">
    <property type="entry name" value="Cys-tRNA-synt_Ia_DALR"/>
</dbReference>
<dbReference type="InterPro" id="IPR024909">
    <property type="entry name" value="Cys-tRNA/MSH_ligase"/>
</dbReference>
<dbReference type="InterPro" id="IPR056411">
    <property type="entry name" value="CysS_C"/>
</dbReference>
<dbReference type="InterPro" id="IPR014729">
    <property type="entry name" value="Rossmann-like_a/b/a_fold"/>
</dbReference>
<dbReference type="InterPro" id="IPR032678">
    <property type="entry name" value="tRNA-synt_1_cat_dom"/>
</dbReference>
<dbReference type="InterPro" id="IPR009080">
    <property type="entry name" value="tRNAsynth_Ia_anticodon-bd"/>
</dbReference>
<dbReference type="NCBIfam" id="TIGR00435">
    <property type="entry name" value="cysS"/>
    <property type="match status" value="1"/>
</dbReference>
<dbReference type="PANTHER" id="PTHR10890:SF3">
    <property type="entry name" value="CYSTEINE--TRNA LIGASE, CYTOPLASMIC"/>
    <property type="match status" value="1"/>
</dbReference>
<dbReference type="PANTHER" id="PTHR10890">
    <property type="entry name" value="CYSTEINYL-TRNA SYNTHETASE"/>
    <property type="match status" value="1"/>
</dbReference>
<dbReference type="Pfam" id="PF23493">
    <property type="entry name" value="CysS_C"/>
    <property type="match status" value="1"/>
</dbReference>
<dbReference type="Pfam" id="PF09190">
    <property type="entry name" value="DALR_2"/>
    <property type="match status" value="1"/>
</dbReference>
<dbReference type="Pfam" id="PF01406">
    <property type="entry name" value="tRNA-synt_1e"/>
    <property type="match status" value="1"/>
</dbReference>
<dbReference type="PRINTS" id="PR00983">
    <property type="entry name" value="TRNASYNTHCYS"/>
</dbReference>
<dbReference type="SMART" id="SM00840">
    <property type="entry name" value="DALR_2"/>
    <property type="match status" value="1"/>
</dbReference>
<dbReference type="SUPFAM" id="SSF47323">
    <property type="entry name" value="Anticodon-binding domain of a subclass of class I aminoacyl-tRNA synthetases"/>
    <property type="match status" value="1"/>
</dbReference>
<dbReference type="SUPFAM" id="SSF52374">
    <property type="entry name" value="Nucleotidylyl transferase"/>
    <property type="match status" value="1"/>
</dbReference>
<feature type="chain" id="PRO_1000090884" description="Cysteine--tRNA ligase">
    <location>
        <begin position="1"/>
        <end position="466"/>
    </location>
</feature>
<feature type="short sequence motif" description="'HIGH' region">
    <location>
        <begin position="29"/>
        <end position="39"/>
    </location>
</feature>
<feature type="short sequence motif" description="'KMSKS' region">
    <location>
        <begin position="264"/>
        <end position="268"/>
    </location>
</feature>
<feature type="binding site" evidence="1">
    <location>
        <position position="27"/>
    </location>
    <ligand>
        <name>Zn(2+)</name>
        <dbReference type="ChEBI" id="CHEBI:29105"/>
    </ligand>
</feature>
<feature type="binding site" evidence="1">
    <location>
        <position position="207"/>
    </location>
    <ligand>
        <name>Zn(2+)</name>
        <dbReference type="ChEBI" id="CHEBI:29105"/>
    </ligand>
</feature>
<feature type="binding site" evidence="1">
    <location>
        <position position="232"/>
    </location>
    <ligand>
        <name>Zn(2+)</name>
        <dbReference type="ChEBI" id="CHEBI:29105"/>
    </ligand>
</feature>
<feature type="binding site" evidence="1">
    <location>
        <position position="236"/>
    </location>
    <ligand>
        <name>Zn(2+)</name>
        <dbReference type="ChEBI" id="CHEBI:29105"/>
    </ligand>
</feature>
<feature type="binding site" evidence="1">
    <location>
        <position position="267"/>
    </location>
    <ligand>
        <name>ATP</name>
        <dbReference type="ChEBI" id="CHEBI:30616"/>
    </ligand>
</feature>